<comment type="function">
    <text>Transcription factor. May be a nuclear hormone receptor coactivator. Enhances transcription of genes with retinoic acid response elements (RARE).</text>
</comment>
<comment type="subunit">
    <text evidence="9">(Microbial infection) Isoform 3 interacts with HCV core protein.</text>
</comment>
<comment type="subcellular location">
    <subcellularLocation>
        <location evidence="5 6 8 16">Nucleus</location>
    </subcellularLocation>
    <text evidence="8">Found in the nuclear body.</text>
</comment>
<comment type="alternative products">
    <event type="alternative splicing"/>
    <isoform>
        <id>Q9HB58-1</id>
        <name>1</name>
        <sequence type="displayed"/>
    </isoform>
    <isoform>
        <id>Q9HB58-2</id>
        <name>2</name>
        <name>IFI75</name>
        <name>75</name>
        <sequence type="described" ref="VSP_005992 VSP_006001 VSP_006002"/>
    </isoform>
    <isoform>
        <id>Q9HB58-3</id>
        <name>3</name>
        <name>Sp110b</name>
        <sequence type="described" ref="VSP_005997 VSP_006000"/>
    </isoform>
    <isoform>
        <id>Q9HB58-4</id>
        <name>4</name>
        <name>IFI41</name>
        <name>41</name>
        <sequence type="described" ref="VSP_005991 VSP_005994 VSP_005995 VSP_005997 VSP_006000"/>
    </isoform>
    <isoform>
        <id>Q9HB58-5</id>
        <name>5</name>
        <sequence type="described" ref="VSP_005996 VSP_005997 VSP_006000"/>
    </isoform>
    <isoform>
        <id>Q9HB58-6</id>
        <name>6</name>
        <sequence type="described" ref="VSP_035593"/>
    </isoform>
    <isoform>
        <id>Q9HB58-7</id>
        <name>7</name>
        <sequence type="described" ref="VSP_046079 VSP_005997 VSP_006000"/>
    </isoform>
</comment>
<comment type="tissue specificity">
    <text>Highly expressed in peripheral blood leukocytes and spleen. Detected at intermediate levels in thymus, prostate, testis, ovary, small intestine and colon, and at low levels in heart, brain, placenta, lung, liver, skeletal muscle, kidney and pancreas.</text>
</comment>
<comment type="induction">
    <text>By IFNG/IFN-gamma and all-trans retinoic acid (ATRA).</text>
</comment>
<comment type="PTM">
    <text>Phosphorylated (isoform 2).</text>
</comment>
<comment type="disease" evidence="12">
    <disease id="DI-01707">
        <name>Hepatic venoocclusive disease with immunodeficiency</name>
        <acronym>VODI</acronym>
        <description>Autosomal recessive primary immunodeficiency associated with hepatic vascular occlusion and fibrosis. The immunodeficiency is characterized by severe hypogammaglobulinemia, combined T and B-cell immunodeficiency, absent lymph node germinal centers, and absent tissue plasma cells.</description>
        <dbReference type="MIM" id="235550"/>
    </disease>
    <text>The disease is caused by variants affecting the gene represented in this entry.</text>
</comment>
<comment type="sequence caution" evidence="22">
    <conflict type="frameshift">
        <sequence resource="EMBL-CDS" id="AAF99318"/>
    </conflict>
</comment>
<comment type="sequence caution" evidence="22">
    <conflict type="frameshift">
        <sequence resource="EMBL-CDS" id="AAG09826"/>
    </conflict>
</comment>
<comment type="sequence caution" evidence="22">
    <conflict type="frameshift">
        <sequence resource="EMBL" id="AK026488"/>
    </conflict>
</comment>
<comment type="sequence caution" evidence="22">
    <molecule>Isoform 3</molecule>
    <conflict type="frameshift">
        <sequence resource="EMBL-CDS" id="AAF99318"/>
    </conflict>
</comment>
<comment type="online information" name="SP110base">
    <link uri="https://databases.lovd.nl/shared/genes/SP110"/>
    <text>SP110 mutation db</text>
</comment>
<evidence type="ECO:0000250" key="1">
    <source>
        <dbReference type="UniProtKB" id="Q8BVK9"/>
    </source>
</evidence>
<evidence type="ECO:0000255" key="2"/>
<evidence type="ECO:0000255" key="3">
    <source>
        <dbReference type="PROSITE-ProRule" id="PRU00035"/>
    </source>
</evidence>
<evidence type="ECO:0000255" key="4">
    <source>
        <dbReference type="PROSITE-ProRule" id="PRU00146"/>
    </source>
</evidence>
<evidence type="ECO:0000255" key="5">
    <source>
        <dbReference type="PROSITE-ProRule" id="PRU00185"/>
    </source>
</evidence>
<evidence type="ECO:0000255" key="6">
    <source>
        <dbReference type="PROSITE-ProRule" id="PRU00747"/>
    </source>
</evidence>
<evidence type="ECO:0000256" key="7">
    <source>
        <dbReference type="SAM" id="MobiDB-lite"/>
    </source>
</evidence>
<evidence type="ECO:0000269" key="8">
    <source>
    </source>
</evidence>
<evidence type="ECO:0000269" key="9">
    <source>
    </source>
</evidence>
<evidence type="ECO:0000269" key="10">
    <source>
    </source>
</evidence>
<evidence type="ECO:0000269" key="11">
    <source>
    </source>
</evidence>
<evidence type="ECO:0000269" key="12">
    <source>
    </source>
</evidence>
<evidence type="ECO:0000269" key="13">
    <source>
    </source>
</evidence>
<evidence type="ECO:0000269" key="14">
    <source>
    </source>
</evidence>
<evidence type="ECO:0000269" key="15">
    <source>
    </source>
</evidence>
<evidence type="ECO:0000269" key="16">
    <source>
    </source>
</evidence>
<evidence type="ECO:0000269" key="17">
    <source>
    </source>
</evidence>
<evidence type="ECO:0000303" key="18">
    <source>
    </source>
</evidence>
<evidence type="ECO:0000303" key="19">
    <source>
    </source>
</evidence>
<evidence type="ECO:0000303" key="20">
    <source>
    </source>
</evidence>
<evidence type="ECO:0000303" key="21">
    <source>
    </source>
</evidence>
<evidence type="ECO:0000305" key="22"/>
<evidence type="ECO:0007744" key="23">
    <source>
    </source>
</evidence>
<evidence type="ECO:0007744" key="24">
    <source>
    </source>
</evidence>
<evidence type="ECO:0007744" key="25">
    <source>
    </source>
</evidence>
<evidence type="ECO:0007744" key="26">
    <source>
    </source>
</evidence>
<sequence length="689" mass="78396">MFTMTRAMEEALFQHFMHQKLGIAYAIHKPFPFFEGLLDNSIITKRMYMESLEACRNLIPVSRVVHNILTQLERTFNLSLLVTLFSQINLREYPNLVTIYRSFKRVGASYEWQSRDTPILLEAPTGLAEGSSLHTPLALPPPQPPQPSCSPCAPRVSEPGTSSQQSDEILSESPSPSDPVLPLPALIQEGRSTSVTNDKLTSKMNAEEDSEEMPSLLTSTVQVASDNLIPQIRDKEDPQEMPHSPLGSMPEIRDNSPEPNDPEEPQEVSSTPSDKKGKKRKRCIWSTPKRRHKKKSLPGGTASSRHGIQKKLKRVDQVPQKKDDSTCNSTVETRAQKARTECARKSRSEEIIDGTSEMNEGKRSQKTPSTPRRVTQGAASPGHGIQEKLQVVDKVTQRKDDSTWNSEVMMRVQKARTKCARKSRLKEKKKEKDICSSSKRRFQKNIHRRGKPKSDTVDFHCSKLPVTCGEAKGILYKKKMKHGSSVKCIRNEDGTWLTPNEFEVEGKGRNAKNWKRNIRCEGMTLGELLKRKNSDECEVCCQGGQLLCCGTCPRVFHEDCHIPPVEAKRMLWSCTFCRMKRSSGSQQCHHVSKTLERQMQPQDQLIRDYGEPFQEAMWLDLVKERLITEMYTVAWFVRDMRLMFRNHKTFYKASDFGQVGLDLEAEFEKDLKDVLGFHEANDGGFWTLP</sequence>
<dbReference type="EMBL" id="L22342">
    <property type="protein sequence ID" value="AAA18806.1"/>
    <property type="molecule type" value="mRNA"/>
</dbReference>
<dbReference type="EMBL" id="L22343">
    <property type="protein sequence ID" value="AAD13402.1"/>
    <property type="molecule type" value="mRNA"/>
</dbReference>
<dbReference type="EMBL" id="AF280094">
    <property type="protein sequence ID" value="AAF99318.1"/>
    <property type="status" value="ALT_FRAME"/>
    <property type="molecule type" value="mRNA"/>
</dbReference>
<dbReference type="EMBL" id="AF280095">
    <property type="protein sequence ID" value="AAG09826.1"/>
    <property type="status" value="ALT_FRAME"/>
    <property type="molecule type" value="mRNA"/>
</dbReference>
<dbReference type="EMBL" id="AK026488">
    <property type="status" value="NOT_ANNOTATED_CDS"/>
    <property type="molecule type" value="mRNA"/>
</dbReference>
<dbReference type="EMBL" id="AK301097">
    <property type="protein sequence ID" value="BAG62696.1"/>
    <property type="molecule type" value="mRNA"/>
</dbReference>
<dbReference type="EMBL" id="AC009950">
    <property type="protein sequence ID" value="AAX93281.1"/>
    <property type="molecule type" value="Genomic_DNA"/>
</dbReference>
<dbReference type="EMBL" id="CH471063">
    <property type="protein sequence ID" value="EAW70915.1"/>
    <property type="molecule type" value="Genomic_DNA"/>
</dbReference>
<dbReference type="EMBL" id="BC019059">
    <property type="protein sequence ID" value="AAH19059.1"/>
    <property type="molecule type" value="mRNA"/>
</dbReference>
<dbReference type="CCDS" id="CCDS2474.1">
    <molecule id="Q9HB58-1"/>
</dbReference>
<dbReference type="CCDS" id="CCDS2475.1">
    <molecule id="Q9HB58-6"/>
</dbReference>
<dbReference type="CCDS" id="CCDS2476.1">
    <molecule id="Q9HB58-3"/>
</dbReference>
<dbReference type="CCDS" id="CCDS54435.1">
    <molecule id="Q9HB58-7"/>
</dbReference>
<dbReference type="PIR" id="A49515">
    <property type="entry name" value="A49515"/>
</dbReference>
<dbReference type="RefSeq" id="NP_001171944.1">
    <molecule id="Q9HB58-7"/>
    <property type="nucleotide sequence ID" value="NM_001185015.2"/>
</dbReference>
<dbReference type="RefSeq" id="NP_004500.3">
    <molecule id="Q9HB58-1"/>
    <property type="nucleotide sequence ID" value="NM_004509.3"/>
</dbReference>
<dbReference type="RefSeq" id="NP_536349.3">
    <molecule id="Q9HB58-6"/>
    <property type="nucleotide sequence ID" value="NM_080424.4"/>
</dbReference>
<dbReference type="SMR" id="Q9HB58"/>
<dbReference type="BioGRID" id="109657">
    <property type="interactions" value="127"/>
</dbReference>
<dbReference type="FunCoup" id="Q9HB58">
    <property type="interactions" value="1200"/>
</dbReference>
<dbReference type="IntAct" id="Q9HB58">
    <property type="interactions" value="35"/>
</dbReference>
<dbReference type="MINT" id="Q9HB58"/>
<dbReference type="STRING" id="9606.ENSP00000258381"/>
<dbReference type="GlyGen" id="Q9HB58">
    <property type="glycosylation" value="1 site"/>
</dbReference>
<dbReference type="iPTMnet" id="Q9HB58"/>
<dbReference type="PhosphoSitePlus" id="Q9HB58"/>
<dbReference type="SwissPalm" id="Q9HB58"/>
<dbReference type="BioMuta" id="SP110"/>
<dbReference type="DMDM" id="313104323"/>
<dbReference type="jPOST" id="Q9HB58"/>
<dbReference type="MassIVE" id="Q9HB58"/>
<dbReference type="PaxDb" id="9606-ENSP00000258381"/>
<dbReference type="PeptideAtlas" id="Q9HB58"/>
<dbReference type="ProteomicsDB" id="25699"/>
<dbReference type="ProteomicsDB" id="81489">
    <molecule id="Q9HB58-1"/>
</dbReference>
<dbReference type="ProteomicsDB" id="81490">
    <molecule id="Q9HB58-2"/>
</dbReference>
<dbReference type="ProteomicsDB" id="81491">
    <molecule id="Q9HB58-3"/>
</dbReference>
<dbReference type="ProteomicsDB" id="81492">
    <molecule id="Q9HB58-4"/>
</dbReference>
<dbReference type="ProteomicsDB" id="81493">
    <molecule id="Q9HB58-5"/>
</dbReference>
<dbReference type="ProteomicsDB" id="81494">
    <molecule id="Q9HB58-6"/>
</dbReference>
<dbReference type="Pumba" id="Q9HB58"/>
<dbReference type="Antibodypedia" id="34401">
    <property type="antibodies" value="379 antibodies from 31 providers"/>
</dbReference>
<dbReference type="DNASU" id="3431"/>
<dbReference type="Ensembl" id="ENST00000258381.11">
    <molecule id="Q9HB58-6"/>
    <property type="protein sequence ID" value="ENSP00000258381.6"/>
    <property type="gene ID" value="ENSG00000135899.20"/>
</dbReference>
<dbReference type="Ensembl" id="ENST00000258382.10">
    <molecule id="Q9HB58-3"/>
    <property type="protein sequence ID" value="ENSP00000258382.5"/>
    <property type="gene ID" value="ENSG00000135899.20"/>
</dbReference>
<dbReference type="Ensembl" id="ENST00000358662.9">
    <molecule id="Q9HB58-1"/>
    <property type="protein sequence ID" value="ENSP00000351488.4"/>
    <property type="gene ID" value="ENSG00000135899.20"/>
</dbReference>
<dbReference type="Ensembl" id="ENST00000540870.5">
    <molecule id="Q9HB58-7"/>
    <property type="protein sequence ID" value="ENSP00000439558.1"/>
    <property type="gene ID" value="ENSG00000135899.20"/>
</dbReference>
<dbReference type="Ensembl" id="ENST00000698099.1">
    <molecule id="Q9HB58-1"/>
    <property type="protein sequence ID" value="ENSP00000513563.1"/>
    <property type="gene ID" value="ENSG00000135899.20"/>
</dbReference>
<dbReference type="GeneID" id="3431"/>
<dbReference type="KEGG" id="hsa:3431"/>
<dbReference type="MANE-Select" id="ENST00000258381.11">
    <molecule id="Q9HB58-6"/>
    <property type="protein sequence ID" value="ENSP00000258381.6"/>
    <property type="RefSeq nucleotide sequence ID" value="NM_080424.4"/>
    <property type="RefSeq protein sequence ID" value="NP_536349.3"/>
</dbReference>
<dbReference type="UCSC" id="uc002vqg.5">
    <molecule id="Q9HB58-1"/>
    <property type="organism name" value="human"/>
</dbReference>
<dbReference type="AGR" id="HGNC:5401"/>
<dbReference type="CTD" id="3431"/>
<dbReference type="DisGeNET" id="3431"/>
<dbReference type="GeneCards" id="SP110"/>
<dbReference type="GeneReviews" id="SP110"/>
<dbReference type="HGNC" id="HGNC:5401">
    <property type="gene designation" value="SP110"/>
</dbReference>
<dbReference type="HPA" id="ENSG00000135899">
    <property type="expression patterns" value="Tissue enhanced (lymphoid)"/>
</dbReference>
<dbReference type="MalaCards" id="SP110"/>
<dbReference type="MIM" id="235550">
    <property type="type" value="phenotype"/>
</dbReference>
<dbReference type="MIM" id="604457">
    <property type="type" value="gene"/>
</dbReference>
<dbReference type="neXtProt" id="NX_Q9HB58"/>
<dbReference type="OpenTargets" id="ENSG00000135899"/>
<dbReference type="Orphanet" id="79124">
    <property type="disease" value="Hepatic veno-occlusive disease-immunodeficiency syndrome"/>
</dbReference>
<dbReference type="PharmGKB" id="PA35104"/>
<dbReference type="VEuPathDB" id="HostDB:ENSG00000135899"/>
<dbReference type="eggNOG" id="KOG2177">
    <property type="taxonomic scope" value="Eukaryota"/>
</dbReference>
<dbReference type="GeneTree" id="ENSGT00940000155124"/>
<dbReference type="HOGENOM" id="CLU_015844_2_0_1"/>
<dbReference type="InParanoid" id="Q9HB58"/>
<dbReference type="OMA" id="QKARNEC"/>
<dbReference type="OrthoDB" id="1870062at2759"/>
<dbReference type="PAN-GO" id="Q9HB58">
    <property type="GO annotations" value="3 GO annotations based on evolutionary models"/>
</dbReference>
<dbReference type="PhylomeDB" id="Q9HB58"/>
<dbReference type="TreeFam" id="TF335091"/>
<dbReference type="PathwayCommons" id="Q9HB58"/>
<dbReference type="SignaLink" id="Q9HB58"/>
<dbReference type="BioGRID-ORCS" id="3431">
    <property type="hits" value="23 hits in 1184 CRISPR screens"/>
</dbReference>
<dbReference type="CD-CODE" id="B5B9A610">
    <property type="entry name" value="PML body"/>
</dbReference>
<dbReference type="ChiTaRS" id="SP110">
    <property type="organism name" value="human"/>
</dbReference>
<dbReference type="GeneWiki" id="SP110"/>
<dbReference type="GenomeRNAi" id="3431"/>
<dbReference type="Pharos" id="Q9HB58">
    <property type="development level" value="Tbio"/>
</dbReference>
<dbReference type="PRO" id="PR:Q9HB58"/>
<dbReference type="Proteomes" id="UP000005640">
    <property type="component" value="Chromosome 2"/>
</dbReference>
<dbReference type="RNAct" id="Q9HB58">
    <property type="molecule type" value="protein"/>
</dbReference>
<dbReference type="Bgee" id="ENSG00000135899">
    <property type="expression patterns" value="Expressed in monocyte and 204 other cell types or tissues"/>
</dbReference>
<dbReference type="ExpressionAtlas" id="Q9HB58">
    <property type="expression patterns" value="baseline and differential"/>
</dbReference>
<dbReference type="GO" id="GO:0005654">
    <property type="term" value="C:nucleoplasm"/>
    <property type="evidence" value="ECO:0000314"/>
    <property type="project" value="HPA"/>
</dbReference>
<dbReference type="GO" id="GO:0005634">
    <property type="term" value="C:nucleus"/>
    <property type="evidence" value="ECO:0000314"/>
    <property type="project" value="UniProtKB"/>
</dbReference>
<dbReference type="GO" id="GO:0003677">
    <property type="term" value="F:DNA binding"/>
    <property type="evidence" value="ECO:0000304"/>
    <property type="project" value="ProtInc"/>
</dbReference>
<dbReference type="GO" id="GO:0000981">
    <property type="term" value="F:DNA-binding transcription factor activity, RNA polymerase II-specific"/>
    <property type="evidence" value="ECO:0000318"/>
    <property type="project" value="GO_Central"/>
</dbReference>
<dbReference type="GO" id="GO:0008270">
    <property type="term" value="F:zinc ion binding"/>
    <property type="evidence" value="ECO:0007669"/>
    <property type="project" value="UniProtKB-KW"/>
</dbReference>
<dbReference type="GO" id="GO:0006357">
    <property type="term" value="P:regulation of transcription by RNA polymerase II"/>
    <property type="evidence" value="ECO:0000318"/>
    <property type="project" value="GO_Central"/>
</dbReference>
<dbReference type="CDD" id="cd15626">
    <property type="entry name" value="PHD_SP110_140"/>
    <property type="match status" value="1"/>
</dbReference>
<dbReference type="FunFam" id="3.30.40.10:FF:000294">
    <property type="entry name" value="Nuclear autoantigen Sp-100"/>
    <property type="match status" value="1"/>
</dbReference>
<dbReference type="FunFam" id="1.20.920.10:FF:000117">
    <property type="entry name" value="Sp110 nuclear body protein"/>
    <property type="match status" value="1"/>
</dbReference>
<dbReference type="Gene3D" id="1.20.920.10">
    <property type="entry name" value="Bromodomain-like"/>
    <property type="match status" value="1"/>
</dbReference>
<dbReference type="Gene3D" id="3.10.390.10">
    <property type="entry name" value="SAND domain-like"/>
    <property type="match status" value="1"/>
</dbReference>
<dbReference type="Gene3D" id="3.30.40.10">
    <property type="entry name" value="Zinc/RING finger domain, C3HC4 (zinc finger)"/>
    <property type="match status" value="1"/>
</dbReference>
<dbReference type="InterPro" id="IPR001487">
    <property type="entry name" value="Bromodomain"/>
</dbReference>
<dbReference type="InterPro" id="IPR036427">
    <property type="entry name" value="Bromodomain-like_sf"/>
</dbReference>
<dbReference type="InterPro" id="IPR004865">
    <property type="entry name" value="HSR_dom"/>
</dbReference>
<dbReference type="InterPro" id="IPR010919">
    <property type="entry name" value="SAND-like_dom_sf"/>
</dbReference>
<dbReference type="InterPro" id="IPR000770">
    <property type="entry name" value="SAND_dom"/>
</dbReference>
<dbReference type="InterPro" id="IPR043563">
    <property type="entry name" value="Sp110/Sp140/Sp140L-like"/>
</dbReference>
<dbReference type="InterPro" id="IPR019786">
    <property type="entry name" value="Zinc_finger_PHD-type_CS"/>
</dbReference>
<dbReference type="InterPro" id="IPR011011">
    <property type="entry name" value="Znf_FYVE_PHD"/>
</dbReference>
<dbReference type="InterPro" id="IPR001965">
    <property type="entry name" value="Znf_PHD"/>
</dbReference>
<dbReference type="InterPro" id="IPR019787">
    <property type="entry name" value="Znf_PHD-finger"/>
</dbReference>
<dbReference type="InterPro" id="IPR013083">
    <property type="entry name" value="Znf_RING/FYVE/PHD"/>
</dbReference>
<dbReference type="PANTHER" id="PTHR46386">
    <property type="entry name" value="NUCLEAR BODY PROTEIN SP140"/>
    <property type="match status" value="1"/>
</dbReference>
<dbReference type="PANTHER" id="PTHR46386:SF7">
    <property type="entry name" value="SP110 NUCLEAR BODY PROTEIN"/>
    <property type="match status" value="1"/>
</dbReference>
<dbReference type="Pfam" id="PF03172">
    <property type="entry name" value="HSR"/>
    <property type="match status" value="1"/>
</dbReference>
<dbReference type="Pfam" id="PF01342">
    <property type="entry name" value="SAND"/>
    <property type="match status" value="1"/>
</dbReference>
<dbReference type="SMART" id="SM00297">
    <property type="entry name" value="BROMO"/>
    <property type="match status" value="1"/>
</dbReference>
<dbReference type="SMART" id="SM00249">
    <property type="entry name" value="PHD"/>
    <property type="match status" value="1"/>
</dbReference>
<dbReference type="SMART" id="SM00258">
    <property type="entry name" value="SAND"/>
    <property type="match status" value="1"/>
</dbReference>
<dbReference type="SUPFAM" id="SSF47370">
    <property type="entry name" value="Bromodomain"/>
    <property type="match status" value="1"/>
</dbReference>
<dbReference type="SUPFAM" id="SSF57903">
    <property type="entry name" value="FYVE/PHD zinc finger"/>
    <property type="match status" value="1"/>
</dbReference>
<dbReference type="SUPFAM" id="SSF63763">
    <property type="entry name" value="SAND domain-like"/>
    <property type="match status" value="1"/>
</dbReference>
<dbReference type="PROSITE" id="PS50014">
    <property type="entry name" value="BROMODOMAIN_2"/>
    <property type="match status" value="1"/>
</dbReference>
<dbReference type="PROSITE" id="PS51414">
    <property type="entry name" value="HSR"/>
    <property type="match status" value="1"/>
</dbReference>
<dbReference type="PROSITE" id="PS50864">
    <property type="entry name" value="SAND"/>
    <property type="match status" value="1"/>
</dbReference>
<dbReference type="PROSITE" id="PS01359">
    <property type="entry name" value="ZF_PHD_1"/>
    <property type="match status" value="1"/>
</dbReference>
<dbReference type="PROSITE" id="PS50016">
    <property type="entry name" value="ZF_PHD_2"/>
    <property type="match status" value="1"/>
</dbReference>
<protein>
    <recommendedName>
        <fullName>Sp110 nuclear body protein</fullName>
    </recommendedName>
    <alternativeName>
        <fullName>Interferon-induced protein 41/75</fullName>
    </alternativeName>
    <alternativeName>
        <fullName>Speckled 110 kDa</fullName>
    </alternativeName>
    <alternativeName>
        <fullName>Transcriptional coactivator Sp110</fullName>
    </alternativeName>
</protein>
<proteinExistence type="evidence at protein level"/>
<organism>
    <name type="scientific">Homo sapiens</name>
    <name type="common">Human</name>
    <dbReference type="NCBI Taxonomy" id="9606"/>
    <lineage>
        <taxon>Eukaryota</taxon>
        <taxon>Metazoa</taxon>
        <taxon>Chordata</taxon>
        <taxon>Craniata</taxon>
        <taxon>Vertebrata</taxon>
        <taxon>Euteleostomi</taxon>
        <taxon>Mammalia</taxon>
        <taxon>Eutheria</taxon>
        <taxon>Euarchontoglires</taxon>
        <taxon>Primates</taxon>
        <taxon>Haplorrhini</taxon>
        <taxon>Catarrhini</taxon>
        <taxon>Hominidae</taxon>
        <taxon>Homo</taxon>
    </lineage>
</organism>
<reference key="1">
    <citation type="journal article" date="1993" name="J. Biol. Chem.">
        <title>Molecular cloning of two new interferon-induced, highly related nuclear phosphoproteins.</title>
        <authorList>
            <person name="Kadereit S."/>
            <person name="Gewert D.R."/>
            <person name="Galabru J."/>
            <person name="Hovanessian A.G."/>
            <person name="Meurs E.F."/>
        </authorList>
    </citation>
    <scope>NUCLEOTIDE SEQUENCE [MRNA] (ISOFORMS 2 AND 4)</scope>
    <scope>PHOSPHORYLATION (ISOFORM 2)</scope>
    <scope>VARIANT ARG-299</scope>
    <source>
        <tissue>Lymphoma</tissue>
    </source>
</reference>
<reference key="2">
    <citation type="journal article" date="2000" name="Mol. Cell. Biol.">
        <title>Sp110 localizes to the PML-Sp100 nuclear body and may function as a nuclear hormone receptor transcriptional coactivator.</title>
        <authorList>
            <person name="Bloch D.B."/>
            <person name="Nakajima A."/>
            <person name="Gulick T."/>
            <person name="Chiche J.-D."/>
            <person name="Orth D."/>
            <person name="de La Monte S.M."/>
            <person name="Bloch K.D."/>
        </authorList>
    </citation>
    <scope>NUCLEOTIDE SEQUENCE [MRNA] (ISOFORMS 1 AND 3)</scope>
    <scope>SUBCELLULAR LOCATION</scope>
    <scope>VARIANTS ARG-299 AND THR-523</scope>
    <source>
        <tissue>Spleen</tissue>
    </source>
</reference>
<reference key="3">
    <citation type="journal article" date="2004" name="Nat. Genet.">
        <title>Complete sequencing and characterization of 21,243 full-length human cDNAs.</title>
        <authorList>
            <person name="Ota T."/>
            <person name="Suzuki Y."/>
            <person name="Nishikawa T."/>
            <person name="Otsuki T."/>
            <person name="Sugiyama T."/>
            <person name="Irie R."/>
            <person name="Wakamatsu A."/>
            <person name="Hayashi K."/>
            <person name="Sato H."/>
            <person name="Nagai K."/>
            <person name="Kimura K."/>
            <person name="Makita H."/>
            <person name="Sekine M."/>
            <person name="Obayashi M."/>
            <person name="Nishi T."/>
            <person name="Shibahara T."/>
            <person name="Tanaka T."/>
            <person name="Ishii S."/>
            <person name="Yamamoto J."/>
            <person name="Saito K."/>
            <person name="Kawai Y."/>
            <person name="Isono Y."/>
            <person name="Nakamura Y."/>
            <person name="Nagahari K."/>
            <person name="Murakami K."/>
            <person name="Yasuda T."/>
            <person name="Iwayanagi T."/>
            <person name="Wagatsuma M."/>
            <person name="Shiratori A."/>
            <person name="Sudo H."/>
            <person name="Hosoiri T."/>
            <person name="Kaku Y."/>
            <person name="Kodaira H."/>
            <person name="Kondo H."/>
            <person name="Sugawara M."/>
            <person name="Takahashi M."/>
            <person name="Kanda K."/>
            <person name="Yokoi T."/>
            <person name="Furuya T."/>
            <person name="Kikkawa E."/>
            <person name="Omura Y."/>
            <person name="Abe K."/>
            <person name="Kamihara K."/>
            <person name="Katsuta N."/>
            <person name="Sato K."/>
            <person name="Tanikawa M."/>
            <person name="Yamazaki M."/>
            <person name="Ninomiya K."/>
            <person name="Ishibashi T."/>
            <person name="Yamashita H."/>
            <person name="Murakawa K."/>
            <person name="Fujimori K."/>
            <person name="Tanai H."/>
            <person name="Kimata M."/>
            <person name="Watanabe M."/>
            <person name="Hiraoka S."/>
            <person name="Chiba Y."/>
            <person name="Ishida S."/>
            <person name="Ono Y."/>
            <person name="Takiguchi S."/>
            <person name="Watanabe S."/>
            <person name="Yosida M."/>
            <person name="Hotuta T."/>
            <person name="Kusano J."/>
            <person name="Kanehori K."/>
            <person name="Takahashi-Fujii A."/>
            <person name="Hara H."/>
            <person name="Tanase T.-O."/>
            <person name="Nomura Y."/>
            <person name="Togiya S."/>
            <person name="Komai F."/>
            <person name="Hara R."/>
            <person name="Takeuchi K."/>
            <person name="Arita M."/>
            <person name="Imose N."/>
            <person name="Musashino K."/>
            <person name="Yuuki H."/>
            <person name="Oshima A."/>
            <person name="Sasaki N."/>
            <person name="Aotsuka S."/>
            <person name="Yoshikawa Y."/>
            <person name="Matsunawa H."/>
            <person name="Ichihara T."/>
            <person name="Shiohata N."/>
            <person name="Sano S."/>
            <person name="Moriya S."/>
            <person name="Momiyama H."/>
            <person name="Satoh N."/>
            <person name="Takami S."/>
            <person name="Terashima Y."/>
            <person name="Suzuki O."/>
            <person name="Nakagawa S."/>
            <person name="Senoh A."/>
            <person name="Mizoguchi H."/>
            <person name="Goto Y."/>
            <person name="Shimizu F."/>
            <person name="Wakebe H."/>
            <person name="Hishigaki H."/>
            <person name="Watanabe T."/>
            <person name="Sugiyama A."/>
            <person name="Takemoto M."/>
            <person name="Kawakami B."/>
            <person name="Yamazaki M."/>
            <person name="Watanabe K."/>
            <person name="Kumagai A."/>
            <person name="Itakura S."/>
            <person name="Fukuzumi Y."/>
            <person name="Fujimori Y."/>
            <person name="Komiyama M."/>
            <person name="Tashiro H."/>
            <person name="Tanigami A."/>
            <person name="Fujiwara T."/>
            <person name="Ono T."/>
            <person name="Yamada K."/>
            <person name="Fujii Y."/>
            <person name="Ozaki K."/>
            <person name="Hirao M."/>
            <person name="Ohmori Y."/>
            <person name="Kawabata A."/>
            <person name="Hikiji T."/>
            <person name="Kobatake N."/>
            <person name="Inagaki H."/>
            <person name="Ikema Y."/>
            <person name="Okamoto S."/>
            <person name="Okitani R."/>
            <person name="Kawakami T."/>
            <person name="Noguchi S."/>
            <person name="Itoh T."/>
            <person name="Shigeta K."/>
            <person name="Senba T."/>
            <person name="Matsumura K."/>
            <person name="Nakajima Y."/>
            <person name="Mizuno T."/>
            <person name="Morinaga M."/>
            <person name="Sasaki M."/>
            <person name="Togashi T."/>
            <person name="Oyama M."/>
            <person name="Hata H."/>
            <person name="Watanabe M."/>
            <person name="Komatsu T."/>
            <person name="Mizushima-Sugano J."/>
            <person name="Satoh T."/>
            <person name="Shirai Y."/>
            <person name="Takahashi Y."/>
            <person name="Nakagawa K."/>
            <person name="Okumura K."/>
            <person name="Nagase T."/>
            <person name="Nomura N."/>
            <person name="Kikuchi H."/>
            <person name="Masuho Y."/>
            <person name="Yamashita R."/>
            <person name="Nakai K."/>
            <person name="Yada T."/>
            <person name="Nakamura Y."/>
            <person name="Ohara O."/>
            <person name="Isogai T."/>
            <person name="Sugano S."/>
        </authorList>
    </citation>
    <scope>NUCLEOTIDE SEQUENCE [LARGE SCALE MRNA] (ISOFORMS 6 AND 7)</scope>
    <scope>VARIANTS ARG-112; LYS-207; ARG-299 AND SER-425</scope>
    <source>
        <tissue>Ileal mucosa</tissue>
        <tissue>Spleen</tissue>
    </source>
</reference>
<reference key="4">
    <citation type="journal article" date="2005" name="Nature">
        <title>Generation and annotation of the DNA sequences of human chromosomes 2 and 4.</title>
        <authorList>
            <person name="Hillier L.W."/>
            <person name="Graves T.A."/>
            <person name="Fulton R.S."/>
            <person name="Fulton L.A."/>
            <person name="Pepin K.H."/>
            <person name="Minx P."/>
            <person name="Wagner-McPherson C."/>
            <person name="Layman D."/>
            <person name="Wylie K."/>
            <person name="Sekhon M."/>
            <person name="Becker M.C."/>
            <person name="Fewell G.A."/>
            <person name="Delehaunty K.D."/>
            <person name="Miner T.L."/>
            <person name="Nash W.E."/>
            <person name="Kremitzki C."/>
            <person name="Oddy L."/>
            <person name="Du H."/>
            <person name="Sun H."/>
            <person name="Bradshaw-Cordum H."/>
            <person name="Ali J."/>
            <person name="Carter J."/>
            <person name="Cordes M."/>
            <person name="Harris A."/>
            <person name="Isak A."/>
            <person name="van Brunt A."/>
            <person name="Nguyen C."/>
            <person name="Du F."/>
            <person name="Courtney L."/>
            <person name="Kalicki J."/>
            <person name="Ozersky P."/>
            <person name="Abbott S."/>
            <person name="Armstrong J."/>
            <person name="Belter E.A."/>
            <person name="Caruso L."/>
            <person name="Cedroni M."/>
            <person name="Cotton M."/>
            <person name="Davidson T."/>
            <person name="Desai A."/>
            <person name="Elliott G."/>
            <person name="Erb T."/>
            <person name="Fronick C."/>
            <person name="Gaige T."/>
            <person name="Haakenson W."/>
            <person name="Haglund K."/>
            <person name="Holmes A."/>
            <person name="Harkins R."/>
            <person name="Kim K."/>
            <person name="Kruchowski S.S."/>
            <person name="Strong C.M."/>
            <person name="Grewal N."/>
            <person name="Goyea E."/>
            <person name="Hou S."/>
            <person name="Levy A."/>
            <person name="Martinka S."/>
            <person name="Mead K."/>
            <person name="McLellan M.D."/>
            <person name="Meyer R."/>
            <person name="Randall-Maher J."/>
            <person name="Tomlinson C."/>
            <person name="Dauphin-Kohlberg S."/>
            <person name="Kozlowicz-Reilly A."/>
            <person name="Shah N."/>
            <person name="Swearengen-Shahid S."/>
            <person name="Snider J."/>
            <person name="Strong J.T."/>
            <person name="Thompson J."/>
            <person name="Yoakum M."/>
            <person name="Leonard S."/>
            <person name="Pearman C."/>
            <person name="Trani L."/>
            <person name="Radionenko M."/>
            <person name="Waligorski J.E."/>
            <person name="Wang C."/>
            <person name="Rock S.M."/>
            <person name="Tin-Wollam A.-M."/>
            <person name="Maupin R."/>
            <person name="Latreille P."/>
            <person name="Wendl M.C."/>
            <person name="Yang S.-P."/>
            <person name="Pohl C."/>
            <person name="Wallis J.W."/>
            <person name="Spieth J."/>
            <person name="Bieri T.A."/>
            <person name="Berkowicz N."/>
            <person name="Nelson J.O."/>
            <person name="Osborne J."/>
            <person name="Ding L."/>
            <person name="Meyer R."/>
            <person name="Sabo A."/>
            <person name="Shotland Y."/>
            <person name="Sinha P."/>
            <person name="Wohldmann P.E."/>
            <person name="Cook L.L."/>
            <person name="Hickenbotham M.T."/>
            <person name="Eldred J."/>
            <person name="Williams D."/>
            <person name="Jones T.A."/>
            <person name="She X."/>
            <person name="Ciccarelli F.D."/>
            <person name="Izaurralde E."/>
            <person name="Taylor J."/>
            <person name="Schmutz J."/>
            <person name="Myers R.M."/>
            <person name="Cox D.R."/>
            <person name="Huang X."/>
            <person name="McPherson J.D."/>
            <person name="Mardis E.R."/>
            <person name="Clifton S.W."/>
            <person name="Warren W.C."/>
            <person name="Chinwalla A.T."/>
            <person name="Eddy S.R."/>
            <person name="Marra M.A."/>
            <person name="Ovcharenko I."/>
            <person name="Furey T.S."/>
            <person name="Miller W."/>
            <person name="Eichler E.E."/>
            <person name="Bork P."/>
            <person name="Suyama M."/>
            <person name="Torrents D."/>
            <person name="Waterston R.H."/>
            <person name="Wilson R.K."/>
        </authorList>
    </citation>
    <scope>NUCLEOTIDE SEQUENCE [LARGE SCALE GENOMIC DNA]</scope>
</reference>
<reference key="5">
    <citation type="submission" date="2005-07" db="EMBL/GenBank/DDBJ databases">
        <authorList>
            <person name="Mural R.J."/>
            <person name="Istrail S."/>
            <person name="Sutton G.G."/>
            <person name="Florea L."/>
            <person name="Halpern A.L."/>
            <person name="Mobarry C.M."/>
            <person name="Lippert R."/>
            <person name="Walenz B."/>
            <person name="Shatkay H."/>
            <person name="Dew I."/>
            <person name="Miller J.R."/>
            <person name="Flanigan M.J."/>
            <person name="Edwards N.J."/>
            <person name="Bolanos R."/>
            <person name="Fasulo D."/>
            <person name="Halldorsson B.V."/>
            <person name="Hannenhalli S."/>
            <person name="Turner R."/>
            <person name="Yooseph S."/>
            <person name="Lu F."/>
            <person name="Nusskern D.R."/>
            <person name="Shue B.C."/>
            <person name="Zheng X.H."/>
            <person name="Zhong F."/>
            <person name="Delcher A.L."/>
            <person name="Huson D.H."/>
            <person name="Kravitz S.A."/>
            <person name="Mouchard L."/>
            <person name="Reinert K."/>
            <person name="Remington K.A."/>
            <person name="Clark A.G."/>
            <person name="Waterman M.S."/>
            <person name="Eichler E.E."/>
            <person name="Adams M.D."/>
            <person name="Hunkapiller M.W."/>
            <person name="Myers E.W."/>
            <person name="Venter J.C."/>
        </authorList>
    </citation>
    <scope>NUCLEOTIDE SEQUENCE [LARGE SCALE GENOMIC DNA]</scope>
</reference>
<reference key="6">
    <citation type="journal article" date="2004" name="Genome Res.">
        <title>The status, quality, and expansion of the NIH full-length cDNA project: the Mammalian Gene Collection (MGC).</title>
        <authorList>
            <consortium name="The MGC Project Team"/>
        </authorList>
    </citation>
    <scope>NUCLEOTIDE SEQUENCE [LARGE SCALE MRNA] (ISOFORM 5)</scope>
    <scope>VARIANT ARG-299</scope>
    <source>
        <tissue>Lymph</tissue>
    </source>
</reference>
<reference key="7">
    <citation type="journal article" date="2003" name="Mol. Cell. Biol.">
        <title>Modulation of retinoid signaling by a cytoplasmic viral protein via sequestration of Sp110b, a potent transcriptional corepressor of retinoic acid receptor, from the nucleus.</title>
        <authorList>
            <person name="Watashi K."/>
            <person name="Hijikata M."/>
            <person name="Tagawa A."/>
            <person name="Doi T."/>
            <person name="Marusawa H."/>
            <person name="Shimotohno K."/>
        </authorList>
    </citation>
    <scope>INTERACTION WITH HCV CORE PROTEIN (MICROBIAL INFECTION)</scope>
</reference>
<reference key="8">
    <citation type="journal article" date="2006" name="Nat. Genet.">
        <title>Mutations in the gene encoding the PML nuclear body protein Sp110 are associated with immunodeficiency and hepatic veno-occlusive disease.</title>
        <authorList>
            <person name="Roscioli T."/>
            <person name="Cliffe S.T."/>
            <person name="Bloch D.B."/>
            <person name="Bell C.G."/>
            <person name="Mullan G."/>
            <person name="Taylor P.J."/>
            <person name="Sarris M."/>
            <person name="Wang J."/>
            <person name="Donald J.A."/>
            <person name="Kirk E.P."/>
            <person name="Ziegler J.B."/>
            <person name="Salzer U."/>
            <person name="McDonald G.B."/>
            <person name="Wong M."/>
            <person name="Lindeman R."/>
            <person name="Buckley M.F."/>
        </authorList>
    </citation>
    <scope>INVOLVEMENT IN VODI</scope>
</reference>
<reference key="9">
    <citation type="journal article" date="2008" name="J. Proteome Res.">
        <title>Phosphorylation analysis of primary human T lymphocytes using sequential IMAC and titanium oxide enrichment.</title>
        <authorList>
            <person name="Carrascal M."/>
            <person name="Ovelleiro D."/>
            <person name="Casas V."/>
            <person name="Gay M."/>
            <person name="Abian J."/>
        </authorList>
    </citation>
    <scope>IDENTIFICATION BY MASS SPECTROMETRY [LARGE SCALE ANALYSIS]</scope>
    <source>
        <tissue>T-cell</tissue>
    </source>
</reference>
<reference key="10">
    <citation type="journal article" date="2009" name="Sci. Signal.">
        <title>Quantitative phosphoproteomic analysis of T cell receptor signaling reveals system-wide modulation of protein-protein interactions.</title>
        <authorList>
            <person name="Mayya V."/>
            <person name="Lundgren D.H."/>
            <person name="Hwang S.-I."/>
            <person name="Rezaul K."/>
            <person name="Wu L."/>
            <person name="Eng J.K."/>
            <person name="Rodionov V."/>
            <person name="Han D.K."/>
        </authorList>
    </citation>
    <scope>PHOSPHORYLATION [LARGE SCALE ANALYSIS] AT SER-256</scope>
    <scope>IDENTIFICATION BY MASS SPECTROMETRY [LARGE SCALE ANALYSIS]</scope>
    <source>
        <tissue>Leukemic T-cell</tissue>
    </source>
</reference>
<reference key="11">
    <citation type="journal article" date="2011" name="Sci. Signal.">
        <title>System-wide temporal characterization of the proteome and phosphoproteome of human embryonic stem cell differentiation.</title>
        <authorList>
            <person name="Rigbolt K.T."/>
            <person name="Prokhorova T.A."/>
            <person name="Akimov V."/>
            <person name="Henningsen J."/>
            <person name="Johansen P.T."/>
            <person name="Kratchmarova I."/>
            <person name="Kassem M."/>
            <person name="Mann M."/>
            <person name="Olsen J.V."/>
            <person name="Blagoev B."/>
        </authorList>
    </citation>
    <scope>PHOSPHORYLATION [LARGE SCALE ANALYSIS] AT SER-256</scope>
    <scope>IDENTIFICATION BY MASS SPECTROMETRY [LARGE SCALE ANALYSIS]</scope>
</reference>
<reference key="12">
    <citation type="journal article" date="2013" name="J. Proteome Res.">
        <title>Toward a comprehensive characterization of a human cancer cell phosphoproteome.</title>
        <authorList>
            <person name="Zhou H."/>
            <person name="Di Palma S."/>
            <person name="Preisinger C."/>
            <person name="Peng M."/>
            <person name="Polat A.N."/>
            <person name="Heck A.J."/>
            <person name="Mohammed S."/>
        </authorList>
    </citation>
    <scope>PHOSPHORYLATION [LARGE SCALE ANALYSIS] AT SER-256 AND SER-380</scope>
    <scope>IDENTIFICATION BY MASS SPECTROMETRY [LARGE SCALE ANALYSIS]</scope>
    <source>
        <tissue>Cervix carcinoma</tissue>
        <tissue>Erythroleukemia</tissue>
    </source>
</reference>
<reference key="13">
    <citation type="journal article" date="2014" name="J. Proteomics">
        <title>An enzyme assisted RP-RPLC approach for in-depth analysis of human liver phosphoproteome.</title>
        <authorList>
            <person name="Bian Y."/>
            <person name="Song C."/>
            <person name="Cheng K."/>
            <person name="Dong M."/>
            <person name="Wang F."/>
            <person name="Huang J."/>
            <person name="Sun D."/>
            <person name="Wang L."/>
            <person name="Ye M."/>
            <person name="Zou H."/>
        </authorList>
    </citation>
    <scope>PHOSPHORYLATION [LARGE SCALE ANALYSIS] AT SER-244 AND SER-380</scope>
    <scope>IDENTIFICATION BY MASS SPECTROMETRY [LARGE SCALE ANALYSIS]</scope>
    <source>
        <tissue>Liver</tissue>
    </source>
</reference>
<reference key="14">
    <citation type="journal article" date="2015" name="Genes Dev.">
        <title>Screen identifies bromodomain protein ZMYND8 in chromatin recognition of transcription-associated DNA damage that promotes homologous recombination.</title>
        <authorList>
            <person name="Gong F."/>
            <person name="Chiu L.Y."/>
            <person name="Cox B."/>
            <person name="Aymard F."/>
            <person name="Clouaire T."/>
            <person name="Leung J.W."/>
            <person name="Cammarata M."/>
            <person name="Perez M."/>
            <person name="Agarwal P."/>
            <person name="Brodbelt J.S."/>
            <person name="Legube G."/>
            <person name="Miller K.M."/>
        </authorList>
    </citation>
    <scope>SUBCELLULAR LOCATION</scope>
</reference>
<reference key="15">
    <citation type="journal article" date="2006" name="J. Med. Genet.">
        <title>No associations of human pulmonary tuberculosis with Sp110 variants.</title>
        <authorList>
            <person name="Thye T."/>
            <person name="Browne E.N."/>
            <person name="Chinbuah M.A."/>
            <person name="Gyapong J."/>
            <person name="Osei I."/>
            <person name="Owusu-Dabo E."/>
            <person name="Niemann S."/>
            <person name="Ruesch-Gerdes S."/>
            <person name="Horstmann R.D."/>
            <person name="Meyer C.G."/>
        </authorList>
    </citation>
    <scope>VARIANTS VAL-128; VAL-206; LYS-207; ARG-299; MET-367 AND SER-425</scope>
</reference>
<reference key="16">
    <citation type="journal article" date="2006" name="Proc. Natl. Acad. Sci. U.S.A.">
        <title>Variants in the SP110 gene are associated with genetic susceptibility to tuberculosis in West Africa.</title>
        <authorList>
            <person name="Tosh K."/>
            <person name="Campbell S.J."/>
            <person name="Fielding K."/>
            <person name="Sillah J."/>
            <person name="Bah B."/>
            <person name="Gustafson P."/>
            <person name="Manneh K."/>
            <person name="Lisse I."/>
            <person name="Sirugo G."/>
            <person name="Bennett S."/>
            <person name="Aaby P."/>
            <person name="McAdam K.P.W.J."/>
            <person name="Bah-Sow O."/>
            <person name="Lienhardt C."/>
            <person name="Kramnik I."/>
            <person name="Hill A.V.S."/>
        </authorList>
    </citation>
    <scope>VARIANTS ARG-112; LYS-207; GLY-212; VAL-249; GLY-267; ARG-299; SER-425; THR-523 AND ILE-579</scope>
</reference>
<reference key="17">
    <citation type="journal article" date="2006" name="Science">
        <title>The consensus coding sequences of human breast and colorectal cancers.</title>
        <authorList>
            <person name="Sjoeblom T."/>
            <person name="Jones S."/>
            <person name="Wood L.D."/>
            <person name="Parsons D.W."/>
            <person name="Lin J."/>
            <person name="Barber T.D."/>
            <person name="Mandelker D."/>
            <person name="Leary R.J."/>
            <person name="Ptak J."/>
            <person name="Silliman N."/>
            <person name="Szabo S."/>
            <person name="Buckhaults P."/>
            <person name="Farrell C."/>
            <person name="Meeh P."/>
            <person name="Markowitz S.D."/>
            <person name="Willis J."/>
            <person name="Dawson D."/>
            <person name="Willson J.K.V."/>
            <person name="Gazdar A.F."/>
            <person name="Hartigan J."/>
            <person name="Wu L."/>
            <person name="Liu C."/>
            <person name="Parmigiani G."/>
            <person name="Park B.H."/>
            <person name="Bachman K.E."/>
            <person name="Papadopoulos N."/>
            <person name="Vogelstein B."/>
            <person name="Kinzler K.W."/>
            <person name="Velculescu V.E."/>
        </authorList>
    </citation>
    <scope>VARIANTS [LARGE SCALE ANALYSIS] THR-8 AND SER-683</scope>
</reference>
<gene>
    <name type="primary">SP110</name>
</gene>
<accession>Q9HB58</accession>
<accession>B4DVI4</accession>
<accession>F5H1M1</accession>
<accession>Q14976</accession>
<accession>Q14977</accession>
<accession>Q53TG2</accession>
<accession>Q8WUZ6</accession>
<accession>Q9HCT8</accession>
<keyword id="KW-0025">Alternative splicing</keyword>
<keyword id="KW-0103">Bromodomain</keyword>
<keyword id="KW-0238">DNA-binding</keyword>
<keyword id="KW-0945">Host-virus interaction</keyword>
<keyword id="KW-0479">Metal-binding</keyword>
<keyword id="KW-0539">Nucleus</keyword>
<keyword id="KW-0597">Phosphoprotein</keyword>
<keyword id="KW-1267">Proteomics identification</keyword>
<keyword id="KW-1185">Reference proteome</keyword>
<keyword id="KW-0804">Transcription</keyword>
<keyword id="KW-0805">Transcription regulation</keyword>
<keyword id="KW-0862">Zinc</keyword>
<keyword id="KW-0863">Zinc-finger</keyword>
<name>SP110_HUMAN</name>
<feature type="chain" id="PRO_0000074101" description="Sp110 nuclear body protein">
    <location>
        <begin position="1"/>
        <end position="689"/>
    </location>
</feature>
<feature type="domain" description="HSR" evidence="6">
    <location>
        <begin position="1"/>
        <end position="108"/>
    </location>
</feature>
<feature type="domain" description="SAND" evidence="5">
    <location>
        <begin position="454"/>
        <end position="535"/>
    </location>
</feature>
<feature type="domain" description="Bromo" evidence="3">
    <location>
        <begin position="583"/>
        <end position="674"/>
    </location>
</feature>
<feature type="zinc finger region" description="PHD-type" evidence="4">
    <location>
        <begin position="534"/>
        <end position="580"/>
    </location>
</feature>
<feature type="region of interest" description="Disordered" evidence="7">
    <location>
        <begin position="131"/>
        <end position="216"/>
    </location>
</feature>
<feature type="region of interest" description="Disordered" evidence="7">
    <location>
        <begin position="231"/>
        <end position="385"/>
    </location>
</feature>
<feature type="region of interest" description="Nuclear hormone receptor interaction" evidence="2">
    <location>
        <begin position="525"/>
        <end position="529"/>
    </location>
</feature>
<feature type="short sequence motif" description="Nuclear localization signal" evidence="2">
    <location>
        <begin position="281"/>
        <end position="294"/>
    </location>
</feature>
<feature type="short sequence motif" description="Nuclear localization signal" evidence="2">
    <location>
        <begin position="428"/>
        <end position="444"/>
    </location>
</feature>
<feature type="compositionally biased region" description="Pro residues" evidence="7">
    <location>
        <begin position="138"/>
        <end position="148"/>
    </location>
</feature>
<feature type="compositionally biased region" description="Polar residues" evidence="7">
    <location>
        <begin position="159"/>
        <end position="168"/>
    </location>
</feature>
<feature type="compositionally biased region" description="Polar residues" evidence="7">
    <location>
        <begin position="190"/>
        <end position="204"/>
    </location>
</feature>
<feature type="compositionally biased region" description="Basic residues" evidence="7">
    <location>
        <begin position="276"/>
        <end position="296"/>
    </location>
</feature>
<feature type="compositionally biased region" description="Basic and acidic residues" evidence="7">
    <location>
        <begin position="314"/>
        <end position="325"/>
    </location>
</feature>
<feature type="compositionally biased region" description="Basic and acidic residues" evidence="7">
    <location>
        <begin position="334"/>
        <end position="350"/>
    </location>
</feature>
<feature type="modified residue" description="Phosphoserine" evidence="1">
    <location>
        <position position="175"/>
    </location>
</feature>
<feature type="modified residue" description="Phosphoserine" evidence="1">
    <location>
        <position position="177"/>
    </location>
</feature>
<feature type="modified residue" description="Phosphoserine" evidence="26">
    <location>
        <position position="244"/>
    </location>
</feature>
<feature type="modified residue" description="Phosphoserine" evidence="23 24 25">
    <location>
        <position position="256"/>
    </location>
</feature>
<feature type="modified residue" description="Phosphoserine" evidence="25 26">
    <location>
        <position position="380"/>
    </location>
</feature>
<feature type="splice variant" id="VSP_005991" description="In isoform 4." evidence="21">
    <location>
        <begin position="1"/>
        <end position="251"/>
    </location>
</feature>
<feature type="splice variant" id="VSP_005992" description="In isoform 2." evidence="21">
    <location>
        <begin position="1"/>
        <end position="203"/>
    </location>
</feature>
<feature type="splice variant" id="VSP_046079" description="In isoform 7." evidence="19">
    <original>M</original>
    <variation>MGRGFRM</variation>
    <location>
        <position position="1"/>
    </location>
</feature>
<feature type="splice variant" id="VSP_005994" description="In isoform 4." evidence="21">
    <original>IRDNSPEPNDPEEPQEVSSTPSDK</original>
    <variation>MASSGVKNTPRWRRKAPHGRERKE</variation>
    <location>
        <begin position="252"/>
        <end position="275"/>
    </location>
</feature>
<feature type="splice variant" id="VSP_005995" description="In isoform 4." evidence="21">
    <location>
        <begin position="300"/>
        <end position="349"/>
    </location>
</feature>
<feature type="splice variant" id="VSP_005996" description="In isoform 5." evidence="20">
    <original>GTAS</original>
    <variation>AL</variation>
    <location>
        <begin position="300"/>
        <end position="303"/>
    </location>
</feature>
<feature type="splice variant" id="VSP_005997" description="In isoform 3, isoform 4, isoform 5 and isoform 7." evidence="18 19 20 21">
    <original>RKNSDECEVCCQGGQLLCC</original>
    <variation>SGLLLCPPRINLKRELNSK</variation>
    <location>
        <begin position="531"/>
        <end position="549"/>
    </location>
</feature>
<feature type="splice variant" id="VSP_006000" description="In isoform 3, isoform 4, isoform 5 and isoform 7." evidence="18 19 20 21">
    <location>
        <begin position="550"/>
        <end position="689"/>
    </location>
</feature>
<feature type="splice variant" id="VSP_035593" description="In isoform 6." evidence="19">
    <original>L</original>
    <variation>LKCEFLLLKAYCHPQSSFFTGIPFN</variation>
    <location>
        <position position="605"/>
    </location>
</feature>
<feature type="splice variant" id="VSP_006001" description="In isoform 2." evidence="21">
    <original>IRDYGE</original>
    <variation>NVSSSS</variation>
    <location>
        <begin position="606"/>
        <end position="611"/>
    </location>
</feature>
<feature type="splice variant" id="VSP_006002" description="In isoform 2." evidence="21">
    <location>
        <begin position="612"/>
        <end position="689"/>
    </location>
</feature>
<feature type="sequence variant" id="VAR_036029" description="In a breast cancer sample; somatic mutation; dbSNP:rs200067258." evidence="15">
    <original>M</original>
    <variation>T</variation>
    <location>
        <position position="8"/>
    </location>
</feature>
<feature type="sequence variant" id="VAR_027170" description="In dbSNP:rs1129411." evidence="10 13">
    <original>W</original>
    <variation>R</variation>
    <location>
        <position position="112"/>
    </location>
</feature>
<feature type="sequence variant" id="VAR_027171" description="In dbSNP:rs11556887." evidence="14">
    <original>A</original>
    <variation>V</variation>
    <location>
        <position position="128"/>
    </location>
</feature>
<feature type="sequence variant" id="VAR_047051" description="In dbSNP:rs41552315.">
    <original>S</original>
    <variation>L</variation>
    <location>
        <position position="173"/>
    </location>
</feature>
<feature type="sequence variant" id="VAR_027172" description="In dbSNP:rs28930679." evidence="14">
    <original>A</original>
    <variation>V</variation>
    <location>
        <position position="206"/>
    </location>
</feature>
<feature type="sequence variant" id="VAR_027173" description="In dbSNP:rs9061." evidence="10 13 14">
    <original>E</original>
    <variation>K</variation>
    <location>
        <position position="207"/>
    </location>
</feature>
<feature type="sequence variant" id="VAR_047052" description="In dbSNP:rs1063154.">
    <original>S</original>
    <variation>A</variation>
    <location>
        <position position="210"/>
    </location>
</feature>
<feature type="sequence variant" id="VAR_027174" description="In dbSNP:rs1047254." evidence="13">
    <original>E</original>
    <variation>G</variation>
    <location>
        <position position="212"/>
    </location>
</feature>
<feature type="sequence variant" id="VAR_027175" description="In dbSNP:rs3769838." evidence="13">
    <original>M</original>
    <variation>V</variation>
    <location>
        <position position="249"/>
    </location>
</feature>
<feature type="sequence variant" id="VAR_027176" description="In dbSNP:rs1129425." evidence="13">
    <original>E</original>
    <variation>G</variation>
    <location>
        <position position="267"/>
    </location>
</feature>
<feature type="sequence variant" id="VAR_027177" description="In dbSNP:rs1365776." evidence="8 10 11 13 14 17">
    <original>G</original>
    <variation>R</variation>
    <location>
        <position position="299"/>
    </location>
</feature>
<feature type="sequence variant" id="VAR_027178" description="In dbSNP:rs59573011." evidence="14">
    <original>T</original>
    <variation>M</variation>
    <location>
        <position position="367"/>
    </location>
</feature>
<feature type="sequence variant" id="VAR_027179" description="May be associated with increased susceptibility to tuberculosis; dbSNP:rs3948464." evidence="10 13 14">
    <original>L</original>
    <variation>S</variation>
    <location>
        <position position="425"/>
    </location>
</feature>
<feature type="sequence variant" id="VAR_027180" description="In dbSNP:rs1135791." evidence="8 13">
    <original>M</original>
    <variation>T</variation>
    <location>
        <position position="523"/>
    </location>
</feature>
<feature type="sequence variant" id="VAR_027181" description="In dbSNP:rs3948463." evidence="13">
    <original>M</original>
    <variation>I</variation>
    <location>
        <position position="579"/>
    </location>
</feature>
<feature type="sequence variant" id="VAR_036030" description="In a breast cancer sample; somatic mutation." evidence="15">
    <original>G</original>
    <variation>S</variation>
    <location>
        <position position="683"/>
    </location>
</feature>
<feature type="sequence conflict" description="In Ref. 2; AAF99318/AAG09826." evidence="22" ref="2">
    <original>D</original>
    <variation>T</variation>
    <location>
        <position position="167"/>
    </location>
</feature>
<feature type="sequence conflict" description="In Ref. 1; AAA18806." evidence="22" ref="1">
    <original>L</original>
    <variation>S</variation>
    <location>
        <position position="464"/>
    </location>
</feature>
<feature type="sequence conflict" description="In Ref. 3; AK026488." evidence="22" ref="3">
    <original>M</original>
    <variation>I</variation>
    <location>
        <position position="570"/>
    </location>
</feature>